<feature type="chain" id="PRO_0000406915" description="Large tegument protein deneddylase">
    <location>
        <begin position="1"/>
        <end position="2457"/>
    </location>
</feature>
<feature type="domain" description="Peptidase C76" evidence="1">
    <location>
        <begin position="13"/>
        <end position="224"/>
    </location>
</feature>
<feature type="region of interest" description="Deubiquitination activity" evidence="1">
    <location>
        <begin position="1"/>
        <end position="234"/>
    </location>
</feature>
<feature type="region of interest" description="Disordered" evidence="2">
    <location>
        <begin position="281"/>
        <end position="350"/>
    </location>
</feature>
<feature type="region of interest" description="Disordered" evidence="2">
    <location>
        <begin position="2064"/>
        <end position="2131"/>
    </location>
</feature>
<feature type="region of interest" description="Disordered" evidence="2">
    <location>
        <begin position="2164"/>
        <end position="2360"/>
    </location>
</feature>
<feature type="region of interest" description="Disordered" evidence="2">
    <location>
        <begin position="2387"/>
        <end position="2407"/>
    </location>
</feature>
<feature type="compositionally biased region" description="Basic and acidic residues" evidence="2">
    <location>
        <begin position="293"/>
        <end position="302"/>
    </location>
</feature>
<feature type="compositionally biased region" description="Acidic residues" evidence="2">
    <location>
        <begin position="314"/>
        <end position="334"/>
    </location>
</feature>
<feature type="compositionally biased region" description="Basic and acidic residues" evidence="2">
    <location>
        <begin position="2080"/>
        <end position="2091"/>
    </location>
</feature>
<feature type="compositionally biased region" description="Pro residues" evidence="2">
    <location>
        <begin position="2115"/>
        <end position="2131"/>
    </location>
</feature>
<feature type="compositionally biased region" description="Polar residues" evidence="2">
    <location>
        <begin position="2173"/>
        <end position="2186"/>
    </location>
</feature>
<feature type="compositionally biased region" description="Basic and acidic residues" evidence="2">
    <location>
        <begin position="2387"/>
        <end position="2398"/>
    </location>
</feature>
<feature type="active site" evidence="1">
    <location>
        <position position="33"/>
    </location>
</feature>
<feature type="active site" evidence="1">
    <location>
        <position position="163"/>
    </location>
</feature>
<feature type="active site" evidence="1">
    <location>
        <position position="165"/>
    </location>
</feature>
<feature type="site" description="Important for catalytic activity" evidence="1">
    <location>
        <position position="20"/>
    </location>
</feature>
<sequence length="2457" mass="273538">MALPASLAGFRIEGTASTNQADCKFGENAGAQCLSNCIIYLMSSYFNNEAPITETHDLNKVLKFGAELDSNLRKLGLLSPGQYAQLDHVPCYVQTRKWSGFIYTSAEMFGLLGMPADISDSCITSLRDLLTANYSNTIQYILYICGQKSGAIIIQGGRYTMFDPHCLKDIPESPAHVLSTSDPDALIKYVGGVSREYTACFLYFVPGHISPKNYIMSHYKVISFSDLHGSKIILEEYDLPTTNQSFCSSPQASSSPDPEVGSLLKYMSKAKRKRYPMSCGEEWTDANKKRKESGRTPPEKMTHPLPSPDIIDLTMDDDVIDLTGDDDMEDESEGDREAEPDRSGTSLPSVTLPNLAAVDQLLNSLTLPGHVPSFPALVDTDTGESYRLTRALHQLKNVLQQVLEIGVVSDSDYTPTEALNVLNYLMAWSKQLQIKNDDIKLLINSNLQIEKLFTLLKNNLISDPNLADHVQAKVCACLPAMHANRATDLQKILLHCKNLTRALEISKSSLDIKDIITTFTESFPQDFFCVCSVEEANNLVSTVQDLKRVVSNNMALTSEQDARFKALMLSVLNNTDPPASLGPIYLETETRTPLLSSAIQEAVKAIEKDTVETLSELISNIPSENAIETTFVPPVRTLLKNVTTLLTVINACVERAEIRTPEIDSSQQQLSYIGRELSKIIDETWPERAFREPVHVLDIFQKTSSHLNDLKKKMADSESLDKILSEINQTLKAIQDKAASPALINTLSDYIKNATVLAQASDPRLVEIQSQVTTLTTSTSYIESLLQKINIRTLPEVIPQLQAATKTEQGQLSLAAMNLSLIQITNSLINEALSSIHARSHNHLSNTFFNSLNSLMGLADIPGREDLIKTMESIMAVQEELVDCDDMECVEKGLTTFKYIKSSIRQYKFDKSFKTKIYLIITSEVRDLTKIKTDKQLEAWKQDVADFTPASIDDLNLFLDKAPTKTARSYATRQLKHFRDDLIKEQEMETETTPVPSTAEIERAIDLKIKATWDKILTNLRDLTFHHIAPGDWQVLLTVFNDHKSALFTKMGGELLKALQGLTAYVDSILTPLLASQLPQGQRYVAPNSDWVETFDQNVKYYLRTFHLPRVSEQLDDLERKTLLLTKLVKFTDLSQSLIGTHLEKDWSIYQKLFNSLLTVYNDHLIKTKTEVHAFLDKIASDPLLEPQAHPDLQKITQLFTEQEIIEINTLPDIFKESIKNNEKHYIASYQTEMKVFTSMVDAALAKKTQSTTEYNTHLLKIVNNMLVQAPPYAASHPISSDAISYITSLVRDKHLLEKLSYAESLKNFNWLSRLITIILTNCHPSHKQHLQTLLDEILSREQTLTPLVALEDNANQSPTERTLQAALTTLNVERVLGRATTFQKWKSQLQELEEAVKTTTQVSLLIQTISSLHDKTVTEMDPTILSSHSQALADKLKELLALKPSLDETTMSLFHGMKAYAQFKHYFVQHYVITQPKIFDAYPLSHHGTVSSSGGHQATKFNPLMRLKAFSMVTDVKKMSVWREINTTVDPTGHTFIPAPPTPAMPPIHYNVLFSSFLQAEAINLALNSNQPPTKKFGLLPGLMDARVGVQGAMLLDNQWNDISTNSAKLLDHYVRSELTPNSLTNSQFAAMTVFAHAMAMVTPHINSTRATIFPSKAIVLNQLQFLKLCLTMWPKFSGGLLRAPSFERVVQLARATLPTLLLSAPRNTLNHFLANNYRPTDTLPNTEALLFYPNQHPLVNLEKLLLTSSPFHALSTSVLNTRISMLVWGILSLSEAVLQQLWDSLYQESATFTTYIDLLRHLSAMNHKNSTLTTSTSLPQNNGPVVYSYGHTAGTTVATLEGSHPLDDGGQNIPMTLFEFVIFAIILKLKFHVFYTQEKALVNTQLGPLHLITHALDGTGDTEPFKTYISIPPQKYNGLGNLQQFCSQDEIQIFQRQHEWLVGVTKQTSFSNEDLFIVLASADNKVLSVHTFNPPINSLESETPEIVAAPIQESWPKEITTVSFWDKPALEKSPQELITEVSLVAEIFSGSAIFNTFPPSYKMVSHTPSLHVETHQLENLSITEGTPPTSPPLPDSTTQDHMEEPDNKQAKPPYQMTSPMKENTSTSGRPARSPSPSPPVLTPIKPIIPIPQATPTMPILSPFTPRLLPAAVKKHQNGAVWGHSGSLPPTHIQSSTPGPAQNTRDSGRRQIVSPVITILPGTKAGADSAGQNTSHKDISAYSPPPASKKTDRPSDTHVTAPLFSKSKLVTPRPAAKTDTGTFGPLLGHEKPPVTDLTAPVEPGHPSKVSPIIHLKPSNTGDRDPHPISDDEDSKQPPVPDTSRDKAQSRWKTPKQRPQNIFPPPKHEDDVPVTAPQPQGRKILVGGRQLPSLVYNPPTLRDIKTGMSDDKNPEPCVKENPPGVTHDPPLRIQHMEQTVNSSKYNVLLFIEKIIKSVHDHSSYMLSTLKRIKQLYI</sequence>
<keyword id="KW-1035">Host cytoplasm</keyword>
<keyword id="KW-1048">Host nucleus</keyword>
<keyword id="KW-0945">Host-virus interaction</keyword>
<keyword id="KW-0378">Hydrolase</keyword>
<keyword id="KW-1127">Modulation of host ubiquitin pathway by viral deubiquitinase</keyword>
<keyword id="KW-1130">Modulation of host ubiquitin pathway by virus</keyword>
<keyword id="KW-0645">Protease</keyword>
<keyword id="KW-1185">Reference proteome</keyword>
<keyword id="KW-0677">Repeat</keyword>
<keyword id="KW-0788">Thiol protease</keyword>
<keyword id="KW-0833">Ubl conjugation pathway</keyword>
<keyword id="KW-0946">Virion</keyword>
<keyword id="KW-0920">Virion tegument</keyword>
<accession>O41965</accession>
<evidence type="ECO:0000255" key="1">
    <source>
        <dbReference type="HAMAP-Rule" id="MF_04044"/>
    </source>
</evidence>
<evidence type="ECO:0000256" key="2">
    <source>
        <dbReference type="SAM" id="MobiDB-lite"/>
    </source>
</evidence>
<evidence type="ECO:0000269" key="3">
    <source>
    </source>
</evidence>
<protein>
    <recommendedName>
        <fullName evidence="1">Large tegument protein deneddylase</fullName>
        <ecNumber evidence="1">3.4.19.12</ecNumber>
        <ecNumber evidence="1">3.4.22.-</ecNumber>
    </recommendedName>
</protein>
<dbReference type="EC" id="3.4.19.12" evidence="1"/>
<dbReference type="EC" id="3.4.22.-" evidence="1"/>
<dbReference type="EMBL" id="U97553">
    <property type="protein sequence ID" value="AAB66417.1"/>
    <property type="molecule type" value="Genomic_DNA"/>
</dbReference>
<dbReference type="EMBL" id="AF105037">
    <property type="protein sequence ID" value="AAF19328.1"/>
    <property type="molecule type" value="Genomic_DNA"/>
</dbReference>
<dbReference type="SMR" id="O41965"/>
<dbReference type="DIP" id="DIP-47224N"/>
<dbReference type="IntAct" id="O41965">
    <property type="interactions" value="1"/>
</dbReference>
<dbReference type="MINT" id="O41965"/>
<dbReference type="KEGG" id="vg:1497174"/>
<dbReference type="Proteomes" id="UP000099649">
    <property type="component" value="Genome"/>
</dbReference>
<dbReference type="Proteomes" id="UP000175018">
    <property type="component" value="Genome"/>
</dbReference>
<dbReference type="GO" id="GO:0030430">
    <property type="term" value="C:host cell cytoplasm"/>
    <property type="evidence" value="ECO:0007669"/>
    <property type="project" value="UniProtKB-SubCell"/>
</dbReference>
<dbReference type="GO" id="GO:0042025">
    <property type="term" value="C:host cell nucleus"/>
    <property type="evidence" value="ECO:0007669"/>
    <property type="project" value="UniProtKB-SubCell"/>
</dbReference>
<dbReference type="GO" id="GO:0019033">
    <property type="term" value="C:viral tegument"/>
    <property type="evidence" value="ECO:0007669"/>
    <property type="project" value="UniProtKB-SubCell"/>
</dbReference>
<dbReference type="GO" id="GO:0004843">
    <property type="term" value="F:cysteine-type deubiquitinase activity"/>
    <property type="evidence" value="ECO:0007669"/>
    <property type="project" value="UniProtKB-EC"/>
</dbReference>
<dbReference type="GO" id="GO:0006508">
    <property type="term" value="P:proteolysis"/>
    <property type="evidence" value="ECO:0007669"/>
    <property type="project" value="UniProtKB-KW"/>
</dbReference>
<dbReference type="GO" id="GO:0039648">
    <property type="term" value="P:symbiont-mediated perturbation of host ubiquitin-like protein modification"/>
    <property type="evidence" value="ECO:0007669"/>
    <property type="project" value="UniProtKB-KW"/>
</dbReference>
<dbReference type="Gene3D" id="3.90.70.120">
    <property type="match status" value="1"/>
</dbReference>
<dbReference type="HAMAP" id="MF_04044">
    <property type="entry name" value="HSV_LTP"/>
    <property type="match status" value="1"/>
</dbReference>
<dbReference type="InterPro" id="IPR006928">
    <property type="entry name" value="Herpes_teg_USP"/>
</dbReference>
<dbReference type="InterPro" id="IPR034702">
    <property type="entry name" value="HSV_LTP"/>
</dbReference>
<dbReference type="InterPro" id="IPR038765">
    <property type="entry name" value="Papain-like_cys_pep_sf"/>
</dbReference>
<dbReference type="Pfam" id="PF04843">
    <property type="entry name" value="Herpes_teg_N"/>
    <property type="match status" value="1"/>
</dbReference>
<dbReference type="SUPFAM" id="SSF54001">
    <property type="entry name" value="Cysteine proteinases"/>
    <property type="match status" value="1"/>
</dbReference>
<dbReference type="PROSITE" id="PS51521">
    <property type="entry name" value="HTUSP"/>
    <property type="match status" value="1"/>
</dbReference>
<organismHost>
    <name type="scientific">Apodemus sylvaticus</name>
    <name type="common">European woodmouse</name>
    <dbReference type="NCBI Taxonomy" id="10129"/>
</organismHost>
<reference key="1">
    <citation type="journal article" date="1997" name="J. Virol.">
        <title>Complete sequence and genomic analysis of murine gammaherpesvirus 68.</title>
        <authorList>
            <person name="Virgin H.W."/>
            <person name="Latreille P."/>
            <person name="Wamsley P."/>
            <person name="Hallsworth K."/>
            <person name="Weck K.E."/>
            <person name="Dal Canto A.J."/>
            <person name="Speck S.H."/>
        </authorList>
    </citation>
    <scope>NUCLEOTIDE SEQUENCE [LARGE SCALE GENOMIC DNA]</scope>
    <source>
        <strain>G2.4</strain>
        <strain>WUMS</strain>
    </source>
</reference>
<reference key="2">
    <citation type="journal article" date="2007" name="J. Virol.">
        <title>A functional ubiquitin-specific protease embedded in the large tegument protein (ORF64) of murine gammaherpesvirus 68 is active during the course of infection.</title>
        <authorList>
            <person name="Gredmark S."/>
            <person name="Schlieker C."/>
            <person name="Quesada V."/>
            <person name="Spooner E."/>
            <person name="Ploegh H.L."/>
        </authorList>
    </citation>
    <scope>FUNCTION</scope>
</reference>
<organism>
    <name type="scientific">Murid herpesvirus 4</name>
    <name type="common">MuHV-4</name>
    <name type="synonym">Murine gammaherpesvirus 68</name>
    <dbReference type="NCBI Taxonomy" id="33708"/>
    <lineage>
        <taxon>Viruses</taxon>
        <taxon>Duplodnaviria</taxon>
        <taxon>Heunggongvirae</taxon>
        <taxon>Peploviricota</taxon>
        <taxon>Herviviricetes</taxon>
        <taxon>Herpesvirales</taxon>
        <taxon>Orthoherpesviridae</taxon>
        <taxon>Gammaherpesvirinae</taxon>
        <taxon>Rhadinovirus</taxon>
        <taxon>Rhadinovirus muridgamma4</taxon>
    </lineage>
</organism>
<gene>
    <name type="ORF">ORF64</name>
</gene>
<name>LTP_MHV68</name>
<comment type="function">
    <text evidence="1 3">Large tegument protein that plays multiple roles in the viral cycle. During viral entry, remains associated with the capsid while most of the tegument is detached and participates in the capsid transport toward the host nucleus. Plays a role in the routing of the capsid at the nuclear pore complex and subsequent uncoating. Within the host nucleus, acts as a deneddylase and promotes the degradation of nuclear CRLs (cullin-RING ubiquitin ligases) and thereby stabilizes nuclear CRL substrates, while cytoplasmic CRLs remain unaffected. These modifications prevent host cell cycle S-phase progression and create a favorable environment allowing efficient viral genome replication. Participates later in the secondary envelopment of capsids. Indeed, plays a linker role for the association of the outer viral tegument to the capsids together with the inner tegument protein.</text>
</comment>
<comment type="catalytic activity">
    <reaction evidence="1">
        <text>Thiol-dependent hydrolysis of ester, thioester, amide, peptide and isopeptide bonds formed by the C-terminal Gly of ubiquitin (a 76-residue protein attached to proteins as an intracellular targeting signal).</text>
        <dbReference type="EC" id="3.4.19.12"/>
    </reaction>
</comment>
<comment type="subunit">
    <text evidence="1">Interacts with host CUL1 and CUL4A; these interactions inhibit the E3 ligase activity of cullins. Interacts with inner tegument protein. Interacts with capsid vertex specific component CVC2. Interacts with the major capsid protein/MCP.</text>
</comment>
<comment type="subcellular location">
    <subcellularLocation>
        <location evidence="1">Virion tegument</location>
    </subcellularLocation>
    <subcellularLocation>
        <location evidence="1">Host cytoplasm</location>
    </subcellularLocation>
    <subcellularLocation>
        <location evidence="1">Host nucleus</location>
    </subcellularLocation>
    <text evidence="1">Tightly associated with the capsid.</text>
</comment>
<comment type="similarity">
    <text evidence="1">Belongs to the herpesviridae large tegument protein family.</text>
</comment>
<proteinExistence type="inferred from homology"/>